<protein>
    <recommendedName>
        <fullName evidence="1">Glutamyl-tRNA reductase</fullName>
        <shortName evidence="1">GluTR</shortName>
        <ecNumber evidence="1">1.2.1.70</ecNumber>
    </recommendedName>
</protein>
<gene>
    <name evidence="1" type="primary">hemA</name>
    <name type="ordered locus">Cyan7425_3501</name>
</gene>
<sequence>MNIAVVGLSHKTAPVEVREKLSVPEDGLEGAIAQLCSYPHIEEVAILSTCNRLEIYIVTSETESGIREVTQFLSEWSHLPLRELRQHLFILLHQDAVMHLMRVAAGLDSLVIGEGQILSQVKNTHKLGQQYNGIGTILNRLFKQAITAGKRVRTETSIGTGAVSISSAAVELAQLKTPCLADCRVAVLGAGKMSRLVVQHLLAKGANQIAILNRSTERARELANQFSEASLQIHSLAELFNVITRYDLIFTGTSATEPLLDRSKLEPVLEVNQSLMIIDIAVPRNVHANVNELEQVQVFNVDDLKAVVAQNQESRRAMAMEAEALLEEELTAFDVWWRSLETVPTISSLRDKIETIREQELEKALSRLGSEFAEKHQEVIEALTRGIVNKILHDPMVQLRAQQDRETRRRAMQSLQMLFNLPVNDSVVNVNS</sequence>
<dbReference type="EC" id="1.2.1.70" evidence="1"/>
<dbReference type="EMBL" id="CP001344">
    <property type="protein sequence ID" value="ACL45824.1"/>
    <property type="molecule type" value="Genomic_DNA"/>
</dbReference>
<dbReference type="SMR" id="B8HR03"/>
<dbReference type="STRING" id="395961.Cyan7425_3501"/>
<dbReference type="KEGG" id="cyn:Cyan7425_3501"/>
<dbReference type="eggNOG" id="COG0373">
    <property type="taxonomic scope" value="Bacteria"/>
</dbReference>
<dbReference type="HOGENOM" id="CLU_035113_2_1_3"/>
<dbReference type="OrthoDB" id="110209at2"/>
<dbReference type="UniPathway" id="UPA00251">
    <property type="reaction ID" value="UER00316"/>
</dbReference>
<dbReference type="UniPathway" id="UPA00668"/>
<dbReference type="GO" id="GO:0008883">
    <property type="term" value="F:glutamyl-tRNA reductase activity"/>
    <property type="evidence" value="ECO:0007669"/>
    <property type="project" value="UniProtKB-UniRule"/>
</dbReference>
<dbReference type="GO" id="GO:0050661">
    <property type="term" value="F:NADP binding"/>
    <property type="evidence" value="ECO:0007669"/>
    <property type="project" value="InterPro"/>
</dbReference>
<dbReference type="GO" id="GO:0015995">
    <property type="term" value="P:chlorophyll biosynthetic process"/>
    <property type="evidence" value="ECO:0007669"/>
    <property type="project" value="UniProtKB-UniPathway"/>
</dbReference>
<dbReference type="GO" id="GO:0006782">
    <property type="term" value="P:protoporphyrinogen IX biosynthetic process"/>
    <property type="evidence" value="ECO:0007669"/>
    <property type="project" value="UniProtKB-UniRule"/>
</dbReference>
<dbReference type="CDD" id="cd05213">
    <property type="entry name" value="NAD_bind_Glutamyl_tRNA_reduct"/>
    <property type="match status" value="1"/>
</dbReference>
<dbReference type="FunFam" id="3.30.460.30:FF:000001">
    <property type="entry name" value="Glutamyl-tRNA reductase"/>
    <property type="match status" value="1"/>
</dbReference>
<dbReference type="FunFam" id="3.40.50.720:FF:000031">
    <property type="entry name" value="Glutamyl-tRNA reductase"/>
    <property type="match status" value="1"/>
</dbReference>
<dbReference type="Gene3D" id="3.30.460.30">
    <property type="entry name" value="Glutamyl-tRNA reductase, N-terminal domain"/>
    <property type="match status" value="1"/>
</dbReference>
<dbReference type="Gene3D" id="3.40.50.720">
    <property type="entry name" value="NAD(P)-binding Rossmann-like Domain"/>
    <property type="match status" value="1"/>
</dbReference>
<dbReference type="HAMAP" id="MF_00087">
    <property type="entry name" value="Glu_tRNA_reductase"/>
    <property type="match status" value="1"/>
</dbReference>
<dbReference type="InterPro" id="IPR000343">
    <property type="entry name" value="4pyrrol_synth_GluRdtase"/>
</dbReference>
<dbReference type="InterPro" id="IPR015896">
    <property type="entry name" value="4pyrrol_synth_GluRdtase_dimer"/>
</dbReference>
<dbReference type="InterPro" id="IPR015895">
    <property type="entry name" value="4pyrrol_synth_GluRdtase_N"/>
</dbReference>
<dbReference type="InterPro" id="IPR018214">
    <property type="entry name" value="GluRdtase_CS"/>
</dbReference>
<dbReference type="InterPro" id="IPR036453">
    <property type="entry name" value="GluRdtase_dimer_dom_sf"/>
</dbReference>
<dbReference type="InterPro" id="IPR036343">
    <property type="entry name" value="GluRdtase_N_sf"/>
</dbReference>
<dbReference type="InterPro" id="IPR036291">
    <property type="entry name" value="NAD(P)-bd_dom_sf"/>
</dbReference>
<dbReference type="InterPro" id="IPR006151">
    <property type="entry name" value="Shikm_DH/Glu-tRNA_Rdtase"/>
</dbReference>
<dbReference type="NCBIfam" id="TIGR01035">
    <property type="entry name" value="hemA"/>
    <property type="match status" value="1"/>
</dbReference>
<dbReference type="NCBIfam" id="NF000744">
    <property type="entry name" value="PRK00045.1-3"/>
    <property type="match status" value="1"/>
</dbReference>
<dbReference type="PANTHER" id="PTHR43120">
    <property type="entry name" value="GLUTAMYL-TRNA REDUCTASE 1, CHLOROPLASTIC"/>
    <property type="match status" value="1"/>
</dbReference>
<dbReference type="PANTHER" id="PTHR43120:SF1">
    <property type="entry name" value="GLUTAMYL-TRNA REDUCTASE 1, CHLOROPLASTIC"/>
    <property type="match status" value="1"/>
</dbReference>
<dbReference type="Pfam" id="PF00745">
    <property type="entry name" value="GlutR_dimer"/>
    <property type="match status" value="1"/>
</dbReference>
<dbReference type="Pfam" id="PF05201">
    <property type="entry name" value="GlutR_N"/>
    <property type="match status" value="1"/>
</dbReference>
<dbReference type="Pfam" id="PF01488">
    <property type="entry name" value="Shikimate_DH"/>
    <property type="match status" value="1"/>
</dbReference>
<dbReference type="PIRSF" id="PIRSF000445">
    <property type="entry name" value="4pyrrol_synth_GluRdtase"/>
    <property type="match status" value="1"/>
</dbReference>
<dbReference type="SUPFAM" id="SSF69742">
    <property type="entry name" value="Glutamyl tRNA-reductase catalytic, N-terminal domain"/>
    <property type="match status" value="1"/>
</dbReference>
<dbReference type="SUPFAM" id="SSF69075">
    <property type="entry name" value="Glutamyl tRNA-reductase dimerization domain"/>
    <property type="match status" value="1"/>
</dbReference>
<dbReference type="SUPFAM" id="SSF51735">
    <property type="entry name" value="NAD(P)-binding Rossmann-fold domains"/>
    <property type="match status" value="1"/>
</dbReference>
<dbReference type="PROSITE" id="PS00747">
    <property type="entry name" value="GLUTR"/>
    <property type="match status" value="1"/>
</dbReference>
<comment type="function">
    <text evidence="1">Catalyzes the NADPH-dependent reduction of glutamyl-tRNA(Glu) to glutamate 1-semialdehyde (GSA).</text>
</comment>
<comment type="catalytic activity">
    <reaction evidence="1">
        <text>(S)-4-amino-5-oxopentanoate + tRNA(Glu) + NADP(+) = L-glutamyl-tRNA(Glu) + NADPH + H(+)</text>
        <dbReference type="Rhea" id="RHEA:12344"/>
        <dbReference type="Rhea" id="RHEA-COMP:9663"/>
        <dbReference type="Rhea" id="RHEA-COMP:9680"/>
        <dbReference type="ChEBI" id="CHEBI:15378"/>
        <dbReference type="ChEBI" id="CHEBI:57501"/>
        <dbReference type="ChEBI" id="CHEBI:57783"/>
        <dbReference type="ChEBI" id="CHEBI:58349"/>
        <dbReference type="ChEBI" id="CHEBI:78442"/>
        <dbReference type="ChEBI" id="CHEBI:78520"/>
        <dbReference type="EC" id="1.2.1.70"/>
    </reaction>
</comment>
<comment type="pathway">
    <text evidence="1">Porphyrin-containing compound metabolism; protoporphyrin-IX biosynthesis; 5-aminolevulinate from L-glutamyl-tRNA(Glu): step 1/2.</text>
</comment>
<comment type="pathway">
    <text evidence="1">Porphyrin-containing compound metabolism; chlorophyll biosynthesis.</text>
</comment>
<comment type="subunit">
    <text evidence="1">Homodimer.</text>
</comment>
<comment type="domain">
    <text evidence="1">Possesses an unusual extended V-shaped dimeric structure with each monomer consisting of three distinct domains arranged along a curved 'spinal' alpha-helix. The N-terminal catalytic domain specifically recognizes the glutamate moiety of the substrate. The second domain is the NADPH-binding domain, and the third C-terminal domain is responsible for dimerization.</text>
</comment>
<comment type="miscellaneous">
    <text evidence="1">During catalysis, the active site Cys acts as a nucleophile attacking the alpha-carbonyl group of tRNA-bound glutamate with the formation of a thioester intermediate between enzyme and glutamate, and the concomitant release of tRNA(Glu). The thioester intermediate is finally reduced by direct hydride transfer from NADPH, to form the product GSA.</text>
</comment>
<comment type="similarity">
    <text evidence="1">Belongs to the glutamyl-tRNA reductase family.</text>
</comment>
<reference key="1">
    <citation type="journal article" date="2011" name="MBio">
        <title>Novel metabolic attributes of the genus Cyanothece, comprising a group of unicellular nitrogen-fixing Cyanobacteria.</title>
        <authorList>
            <person name="Bandyopadhyay A."/>
            <person name="Elvitigala T."/>
            <person name="Welsh E."/>
            <person name="Stockel J."/>
            <person name="Liberton M."/>
            <person name="Min H."/>
            <person name="Sherman L.A."/>
            <person name="Pakrasi H.B."/>
        </authorList>
    </citation>
    <scope>NUCLEOTIDE SEQUENCE [LARGE SCALE GENOMIC DNA]</scope>
    <source>
        <strain>PCC 7425 / ATCC 29141</strain>
    </source>
</reference>
<organism>
    <name type="scientific">Cyanothece sp. (strain PCC 7425 / ATCC 29141)</name>
    <dbReference type="NCBI Taxonomy" id="395961"/>
    <lineage>
        <taxon>Bacteria</taxon>
        <taxon>Bacillati</taxon>
        <taxon>Cyanobacteriota</taxon>
        <taxon>Cyanophyceae</taxon>
        <taxon>Gomontiellales</taxon>
        <taxon>Cyanothecaceae</taxon>
        <taxon>Cyanothece</taxon>
    </lineage>
</organism>
<evidence type="ECO:0000255" key="1">
    <source>
        <dbReference type="HAMAP-Rule" id="MF_00087"/>
    </source>
</evidence>
<feature type="chain" id="PRO_1000190516" description="Glutamyl-tRNA reductase">
    <location>
        <begin position="1"/>
        <end position="432"/>
    </location>
</feature>
<feature type="active site" description="Nucleophile" evidence="1">
    <location>
        <position position="50"/>
    </location>
</feature>
<feature type="binding site" evidence="1">
    <location>
        <begin position="49"/>
        <end position="52"/>
    </location>
    <ligand>
        <name>substrate</name>
    </ligand>
</feature>
<feature type="binding site" evidence="1">
    <location>
        <position position="109"/>
    </location>
    <ligand>
        <name>substrate</name>
    </ligand>
</feature>
<feature type="binding site" evidence="1">
    <location>
        <begin position="114"/>
        <end position="116"/>
    </location>
    <ligand>
        <name>substrate</name>
    </ligand>
</feature>
<feature type="binding site" evidence="1">
    <location>
        <position position="120"/>
    </location>
    <ligand>
        <name>substrate</name>
    </ligand>
</feature>
<feature type="binding site" evidence="1">
    <location>
        <begin position="189"/>
        <end position="194"/>
    </location>
    <ligand>
        <name>NADP(+)</name>
        <dbReference type="ChEBI" id="CHEBI:58349"/>
    </ligand>
</feature>
<feature type="site" description="Important for activity" evidence="1">
    <location>
        <position position="99"/>
    </location>
</feature>
<accession>B8HR03</accession>
<keyword id="KW-0149">Chlorophyll biosynthesis</keyword>
<keyword id="KW-0521">NADP</keyword>
<keyword id="KW-0560">Oxidoreductase</keyword>
<keyword id="KW-0627">Porphyrin biosynthesis</keyword>
<name>HEM1_CYAP4</name>
<proteinExistence type="inferred from homology"/>